<reference key="1">
    <citation type="journal article" date="2004" name="Proc. Natl. Acad. Sci. U.S.A.">
        <title>Insights into the evolution of Yersinia pestis through whole-genome comparison with Yersinia pseudotuberculosis.</title>
        <authorList>
            <person name="Chain P.S.G."/>
            <person name="Carniel E."/>
            <person name="Larimer F.W."/>
            <person name="Lamerdin J."/>
            <person name="Stoutland P.O."/>
            <person name="Regala W.M."/>
            <person name="Georgescu A.M."/>
            <person name="Vergez L.M."/>
            <person name="Land M.L."/>
            <person name="Motin V.L."/>
            <person name="Brubaker R.R."/>
            <person name="Fowler J."/>
            <person name="Hinnebusch J."/>
            <person name="Marceau M."/>
            <person name="Medigue C."/>
            <person name="Simonet M."/>
            <person name="Chenal-Francisque V."/>
            <person name="Souza B."/>
            <person name="Dacheux D."/>
            <person name="Elliott J.M."/>
            <person name="Derbise A."/>
            <person name="Hauser L.J."/>
            <person name="Garcia E."/>
        </authorList>
    </citation>
    <scope>NUCLEOTIDE SEQUENCE [LARGE SCALE GENOMIC DNA]</scope>
    <source>
        <strain>IP32953</strain>
    </source>
</reference>
<organism>
    <name type="scientific">Yersinia pseudotuberculosis serotype I (strain IP32953)</name>
    <dbReference type="NCBI Taxonomy" id="273123"/>
    <lineage>
        <taxon>Bacteria</taxon>
        <taxon>Pseudomonadati</taxon>
        <taxon>Pseudomonadota</taxon>
        <taxon>Gammaproteobacteria</taxon>
        <taxon>Enterobacterales</taxon>
        <taxon>Yersiniaceae</taxon>
        <taxon>Yersinia</taxon>
    </lineage>
</organism>
<dbReference type="EMBL" id="BX936398">
    <property type="protein sequence ID" value="CAH20669.1"/>
    <property type="molecule type" value="Genomic_DNA"/>
</dbReference>
<dbReference type="SMR" id="Q66CH4"/>
<dbReference type="KEGG" id="yps:YPTB1429"/>
<dbReference type="Proteomes" id="UP000001011">
    <property type="component" value="Chromosome"/>
</dbReference>
<dbReference type="GO" id="GO:0005737">
    <property type="term" value="C:cytoplasm"/>
    <property type="evidence" value="ECO:0007669"/>
    <property type="project" value="UniProtKB-UniRule"/>
</dbReference>
<dbReference type="GO" id="GO:0009295">
    <property type="term" value="C:nucleoid"/>
    <property type="evidence" value="ECO:0007669"/>
    <property type="project" value="UniProtKB-SubCell"/>
</dbReference>
<dbReference type="GO" id="GO:0051301">
    <property type="term" value="P:cell division"/>
    <property type="evidence" value="ECO:0007669"/>
    <property type="project" value="UniProtKB-KW"/>
</dbReference>
<dbReference type="GO" id="GO:0030261">
    <property type="term" value="P:chromosome condensation"/>
    <property type="evidence" value="ECO:0007669"/>
    <property type="project" value="UniProtKB-KW"/>
</dbReference>
<dbReference type="GO" id="GO:0007059">
    <property type="term" value="P:chromosome segregation"/>
    <property type="evidence" value="ECO:0007669"/>
    <property type="project" value="UniProtKB-UniRule"/>
</dbReference>
<dbReference type="GO" id="GO:0006260">
    <property type="term" value="P:DNA replication"/>
    <property type="evidence" value="ECO:0007669"/>
    <property type="project" value="UniProtKB-UniRule"/>
</dbReference>
<dbReference type="CDD" id="cd16336">
    <property type="entry name" value="MukE"/>
    <property type="match status" value="1"/>
</dbReference>
<dbReference type="Gene3D" id="1.10.10.2250">
    <property type="match status" value="1"/>
</dbReference>
<dbReference type="Gene3D" id="1.10.10.2260">
    <property type="entry name" value="MukE-like family, C-terminal domain"/>
    <property type="match status" value="1"/>
</dbReference>
<dbReference type="HAMAP" id="MF_01802">
    <property type="entry name" value="MukE"/>
    <property type="match status" value="1"/>
</dbReference>
<dbReference type="InterPro" id="IPR042037">
    <property type="entry name" value="MukE_C"/>
</dbReference>
<dbReference type="InterPro" id="IPR042038">
    <property type="entry name" value="MukE_N"/>
</dbReference>
<dbReference type="InterPro" id="IPR007385">
    <property type="entry name" value="Scp_MukE"/>
</dbReference>
<dbReference type="NCBIfam" id="NF003602">
    <property type="entry name" value="PRK05256.1"/>
    <property type="match status" value="1"/>
</dbReference>
<dbReference type="Pfam" id="PF04288">
    <property type="entry name" value="MukE"/>
    <property type="match status" value="1"/>
</dbReference>
<proteinExistence type="inferred from homology"/>
<gene>
    <name evidence="1" type="primary">mukE</name>
    <name type="ordered locus">YPTB1429</name>
</gene>
<feature type="chain" id="PRO_0000206809" description="Chromosome partition protein MukE">
    <location>
        <begin position="1"/>
        <end position="233"/>
    </location>
</feature>
<feature type="region of interest" description="Disordered" evidence="2">
    <location>
        <begin position="207"/>
        <end position="233"/>
    </location>
</feature>
<name>MUKE_YERPS</name>
<sequence length="233" mass="26682">MPVKLAQALANTLFPALDSQLRAGRHIGIDELDNHAFLMDFQEQLEEFYARYNVELIRAPEGFFYLRPRSTTLIPRSVLSELDMMVGKILCYLYLSPERLAHEGIFSQQELYEELLSLADESKLLKFVNQRSTGSDLDKQKLQEKVRTSLNRLRRLGMIYFMGNDSTKFRITEAVFRFGADVRSGDDQREAQLRMIRDGEAMAVENSLSLHDESDDADVTMGNAADSVEDEQE</sequence>
<protein>
    <recommendedName>
        <fullName evidence="1">Chromosome partition protein MukE</fullName>
    </recommendedName>
</protein>
<keyword id="KW-0131">Cell cycle</keyword>
<keyword id="KW-0132">Cell division</keyword>
<keyword id="KW-0159">Chromosome partition</keyword>
<keyword id="KW-0963">Cytoplasm</keyword>
<keyword id="KW-0226">DNA condensation</keyword>
<accession>Q66CH4</accession>
<comment type="function">
    <text evidence="1">Involved in chromosome condensation, segregation and cell cycle progression. May participate in facilitating chromosome segregation by condensation DNA from both sides of a centrally located replisome during cell division. Probably acts via its interaction with MukB and MukF.</text>
</comment>
<comment type="subunit">
    <text evidence="1">Interacts, and probably forms a ternary complex, with MukF and MukB. The complex formation is stimulated by calcium or magnesium.</text>
</comment>
<comment type="subcellular location">
    <subcellularLocation>
        <location evidence="1">Cytoplasm</location>
        <location evidence="1">Nucleoid</location>
    </subcellularLocation>
    <text evidence="1">Restricted to the nucleoid region.</text>
</comment>
<comment type="similarity">
    <text evidence="1">Belongs to the MukE family.</text>
</comment>
<evidence type="ECO:0000255" key="1">
    <source>
        <dbReference type="HAMAP-Rule" id="MF_01802"/>
    </source>
</evidence>
<evidence type="ECO:0000256" key="2">
    <source>
        <dbReference type="SAM" id="MobiDB-lite"/>
    </source>
</evidence>